<comment type="interaction">
    <interactant intactId="EBI-25834085">
        <id>Q8N323</id>
    </interactant>
    <interactant intactId="EBI-2371423">
        <id>O43865</id>
        <label>AHCYL1</label>
    </interactant>
    <organismsDiffer>false</organismsDiffer>
    <experiments>3</experiments>
</comment>
<comment type="interaction">
    <interactant intactId="EBI-25834085">
        <id>Q8N323</id>
    </interactant>
    <interactant intactId="EBI-1049597">
        <id>P27797</id>
        <label>CALR</label>
    </interactant>
    <organismsDiffer>false</organismsDiffer>
    <experiments>3</experiments>
</comment>
<comment type="interaction">
    <interactant intactId="EBI-25834085">
        <id>Q8N323</id>
    </interactant>
    <interactant intactId="EBI-727477">
        <id>P12830</id>
        <label>CDH1</label>
    </interactant>
    <organismsDiffer>false</organismsDiffer>
    <experiments>3</experiments>
</comment>
<comment type="interaction">
    <interactant intactId="EBI-25834085">
        <id>Q8N323</id>
    </interactant>
    <interactant intactId="EBI-351007">
        <id>P36957</id>
        <label>DLST</label>
    </interactant>
    <organismsDiffer>false</organismsDiffer>
    <experiments>3</experiments>
</comment>
<comment type="interaction">
    <interactant intactId="EBI-25834085">
        <id>Q8N323</id>
    </interactant>
    <interactant intactId="EBI-1055945">
        <id>Q8TDX7</id>
        <label>NEK7</label>
    </interactant>
    <organismsDiffer>false</organismsDiffer>
    <experiments>3</experiments>
</comment>
<comment type="subcellular location">
    <subcellularLocation>
        <location>Secreted</location>
    </subcellularLocation>
</comment>
<comment type="alternative products">
    <event type="alternative splicing"/>
    <isoform>
        <id>Q8N323-1</id>
        <name>1</name>
        <sequence type="displayed"/>
    </isoform>
    <isoform>
        <id>Q8N323-2</id>
        <name>2</name>
        <sequence type="described" ref="VSP_028872"/>
    </isoform>
</comment>
<comment type="similarity">
    <text evidence="3">Belongs to the NXPE family.</text>
</comment>
<evidence type="ECO:0000255" key="1"/>
<evidence type="ECO:0000303" key="2">
    <source>
    </source>
</evidence>
<evidence type="ECO:0000305" key="3"/>
<organism>
    <name type="scientific">Homo sapiens</name>
    <name type="common">Human</name>
    <dbReference type="NCBI Taxonomy" id="9606"/>
    <lineage>
        <taxon>Eukaryota</taxon>
        <taxon>Metazoa</taxon>
        <taxon>Chordata</taxon>
        <taxon>Craniata</taxon>
        <taxon>Vertebrata</taxon>
        <taxon>Euteleostomi</taxon>
        <taxon>Mammalia</taxon>
        <taxon>Eutheria</taxon>
        <taxon>Euarchontoglires</taxon>
        <taxon>Primates</taxon>
        <taxon>Haplorrhini</taxon>
        <taxon>Catarrhini</taxon>
        <taxon>Hominidae</taxon>
        <taxon>Homo</taxon>
    </lineage>
</organism>
<name>NXPE1_HUMAN</name>
<reference key="1">
    <citation type="journal article" date="2006" name="Nature">
        <title>Human chromosome 11 DNA sequence and analysis including novel gene identification.</title>
        <authorList>
            <person name="Taylor T.D."/>
            <person name="Noguchi H."/>
            <person name="Totoki Y."/>
            <person name="Toyoda A."/>
            <person name="Kuroki Y."/>
            <person name="Dewar K."/>
            <person name="Lloyd C."/>
            <person name="Itoh T."/>
            <person name="Takeda T."/>
            <person name="Kim D.-W."/>
            <person name="She X."/>
            <person name="Barlow K.F."/>
            <person name="Bloom T."/>
            <person name="Bruford E."/>
            <person name="Chang J.L."/>
            <person name="Cuomo C.A."/>
            <person name="Eichler E."/>
            <person name="FitzGerald M.G."/>
            <person name="Jaffe D.B."/>
            <person name="LaButti K."/>
            <person name="Nicol R."/>
            <person name="Park H.-S."/>
            <person name="Seaman C."/>
            <person name="Sougnez C."/>
            <person name="Yang X."/>
            <person name="Zimmer A.R."/>
            <person name="Zody M.C."/>
            <person name="Birren B.W."/>
            <person name="Nusbaum C."/>
            <person name="Fujiyama A."/>
            <person name="Hattori M."/>
            <person name="Rogers J."/>
            <person name="Lander E.S."/>
            <person name="Sakaki Y."/>
        </authorList>
    </citation>
    <scope>NUCLEOTIDE SEQUENCE [LARGE SCALE GENOMIC DNA]</scope>
</reference>
<reference key="2">
    <citation type="submission" date="2005-07" db="EMBL/GenBank/DDBJ databases">
        <authorList>
            <person name="Mural R.J."/>
            <person name="Istrail S."/>
            <person name="Sutton G.G."/>
            <person name="Florea L."/>
            <person name="Halpern A.L."/>
            <person name="Mobarry C.M."/>
            <person name="Lippert R."/>
            <person name="Walenz B."/>
            <person name="Shatkay H."/>
            <person name="Dew I."/>
            <person name="Miller J.R."/>
            <person name="Flanigan M.J."/>
            <person name="Edwards N.J."/>
            <person name="Bolanos R."/>
            <person name="Fasulo D."/>
            <person name="Halldorsson B.V."/>
            <person name="Hannenhalli S."/>
            <person name="Turner R."/>
            <person name="Yooseph S."/>
            <person name="Lu F."/>
            <person name="Nusskern D.R."/>
            <person name="Shue B.C."/>
            <person name="Zheng X.H."/>
            <person name="Zhong F."/>
            <person name="Delcher A.L."/>
            <person name="Huson D.H."/>
            <person name="Kravitz S.A."/>
            <person name="Mouchard L."/>
            <person name="Reinert K."/>
            <person name="Remington K.A."/>
            <person name="Clark A.G."/>
            <person name="Waterman M.S."/>
            <person name="Eichler E.E."/>
            <person name="Adams M.D."/>
            <person name="Hunkapiller M.W."/>
            <person name="Myers E.W."/>
            <person name="Venter J.C."/>
        </authorList>
    </citation>
    <scope>NUCLEOTIDE SEQUENCE [LARGE SCALE GENOMIC DNA]</scope>
</reference>
<reference key="3">
    <citation type="submission" date="2007-02" db="EMBL/GenBank/DDBJ databases">
        <authorList>
            <consortium name="NHLBI resequencing and genotyping service (RS&amp;G)"/>
        </authorList>
    </citation>
    <scope>NUCLEOTIDE SEQUENCE [GENOMIC DNA]</scope>
</reference>
<reference key="4">
    <citation type="journal article" date="2004" name="Genome Res.">
        <title>The status, quality, and expansion of the NIH full-length cDNA project: the Mammalian Gene Collection (MGC).</title>
        <authorList>
            <consortium name="The MGC Project Team"/>
        </authorList>
    </citation>
    <scope>NUCLEOTIDE SEQUENCE [LARGE SCALE MRNA] (ISOFORM 2)</scope>
    <source>
        <tissue>Colon</tissue>
    </source>
</reference>
<dbReference type="EMBL" id="AC020549">
    <property type="status" value="NOT_ANNOTATED_CDS"/>
    <property type="molecule type" value="Genomic_DNA"/>
</dbReference>
<dbReference type="EMBL" id="EF444977">
    <property type="protein sequence ID" value="ACA05991.1"/>
    <property type="molecule type" value="Genomic_DNA"/>
</dbReference>
<dbReference type="EMBL" id="CH471065">
    <property type="protein sequence ID" value="EAW67252.1"/>
    <property type="molecule type" value="Genomic_DNA"/>
</dbReference>
<dbReference type="EMBL" id="BC029049">
    <property type="protein sequence ID" value="AAH29049.1"/>
    <property type="molecule type" value="mRNA"/>
</dbReference>
<dbReference type="CCDS" id="CCDS8372.1">
    <molecule id="Q8N323-2"/>
</dbReference>
<dbReference type="CCDS" id="CCDS91598.1">
    <molecule id="Q8N323-1"/>
</dbReference>
<dbReference type="RefSeq" id="NP_001354882.1">
    <molecule id="Q8N323-1"/>
    <property type="nucleotide sequence ID" value="NM_001367953.1"/>
</dbReference>
<dbReference type="RefSeq" id="NP_001382433.1">
    <molecule id="Q8N323-1"/>
    <property type="nucleotide sequence ID" value="NM_001395504.1"/>
</dbReference>
<dbReference type="RefSeq" id="NP_689528.2">
    <molecule id="Q8N323-2"/>
    <property type="nucleotide sequence ID" value="NM_152315.5"/>
</dbReference>
<dbReference type="RefSeq" id="XP_011540896.1">
    <property type="nucleotide sequence ID" value="XM_011542594.2"/>
</dbReference>
<dbReference type="RefSeq" id="XP_011540897.1">
    <property type="nucleotide sequence ID" value="XM_011542595.2"/>
</dbReference>
<dbReference type="RefSeq" id="XP_011540898.1">
    <molecule id="Q8N323-1"/>
    <property type="nucleotide sequence ID" value="XM_011542596.4"/>
</dbReference>
<dbReference type="RefSeq" id="XP_011540899.1">
    <molecule id="Q8N323-1"/>
    <property type="nucleotide sequence ID" value="XM_011542597.4"/>
</dbReference>
<dbReference type="RefSeq" id="XP_011540900.1">
    <molecule id="Q8N323-1"/>
    <property type="nucleotide sequence ID" value="XM_011542598.4"/>
</dbReference>
<dbReference type="RefSeq" id="XP_011540901.1">
    <molecule id="Q8N323-1"/>
    <property type="nucleotide sequence ID" value="XM_011542599.4"/>
</dbReference>
<dbReference type="RefSeq" id="XP_047282327.1">
    <molecule id="Q8N323-1"/>
    <property type="nucleotide sequence ID" value="XM_047426371.1"/>
</dbReference>
<dbReference type="RefSeq" id="XP_047282328.1">
    <molecule id="Q8N323-1"/>
    <property type="nucleotide sequence ID" value="XM_047426372.1"/>
</dbReference>
<dbReference type="RefSeq" id="XP_054223648.1">
    <molecule id="Q8N323-1"/>
    <property type="nucleotide sequence ID" value="XM_054367673.1"/>
</dbReference>
<dbReference type="RefSeq" id="XP_054223649.1">
    <molecule id="Q8N323-1"/>
    <property type="nucleotide sequence ID" value="XM_054367674.1"/>
</dbReference>
<dbReference type="RefSeq" id="XP_054223650.1">
    <molecule id="Q8N323-1"/>
    <property type="nucleotide sequence ID" value="XM_054367675.1"/>
</dbReference>
<dbReference type="RefSeq" id="XP_054223651.1">
    <molecule id="Q8N323-1"/>
    <property type="nucleotide sequence ID" value="XM_054367676.1"/>
</dbReference>
<dbReference type="IntAct" id="Q8N323">
    <property type="interactions" value="5"/>
</dbReference>
<dbReference type="STRING" id="9606.ENSP00000251921"/>
<dbReference type="GlyCosmos" id="Q8N323">
    <property type="glycosylation" value="2 sites, No reported glycans"/>
</dbReference>
<dbReference type="GlyGen" id="Q8N323">
    <property type="glycosylation" value="2 sites"/>
</dbReference>
<dbReference type="iPTMnet" id="Q8N323"/>
<dbReference type="PhosphoSitePlus" id="Q8N323"/>
<dbReference type="BioMuta" id="NXPE1"/>
<dbReference type="DMDM" id="160014059"/>
<dbReference type="jPOST" id="Q8N323"/>
<dbReference type="MassIVE" id="Q8N323"/>
<dbReference type="PaxDb" id="9606-ENSP00000251921"/>
<dbReference type="PeptideAtlas" id="Q8N323"/>
<dbReference type="ProteomicsDB" id="71755">
    <molecule id="Q8N323-1"/>
</dbReference>
<dbReference type="ProteomicsDB" id="71756">
    <molecule id="Q8N323-2"/>
</dbReference>
<dbReference type="Antibodypedia" id="32251">
    <property type="antibodies" value="42 antibodies from 11 providers"/>
</dbReference>
<dbReference type="DNASU" id="120400"/>
<dbReference type="Ensembl" id="ENST00000251921.6">
    <molecule id="Q8N323-2"/>
    <property type="protein sequence ID" value="ENSP00000251921.2"/>
    <property type="gene ID" value="ENSG00000095110.9"/>
</dbReference>
<dbReference type="Ensembl" id="ENST00000534921.3">
    <molecule id="Q8N323-1"/>
    <property type="protein sequence ID" value="ENSP00000439503.2"/>
    <property type="gene ID" value="ENSG00000095110.9"/>
</dbReference>
<dbReference type="Ensembl" id="ENST00000696071.1">
    <molecule id="Q8N323-1"/>
    <property type="protein sequence ID" value="ENSP00000512373.1"/>
    <property type="gene ID" value="ENSG00000095110.9"/>
</dbReference>
<dbReference type="GeneID" id="120400"/>
<dbReference type="KEGG" id="hsa:120400"/>
<dbReference type="MANE-Select" id="ENST00000534921.3">
    <property type="protein sequence ID" value="ENSP00000439503.2"/>
    <property type="RefSeq nucleotide sequence ID" value="NM_001395504.1"/>
    <property type="RefSeq protein sequence ID" value="NP_001382433.1"/>
</dbReference>
<dbReference type="UCSC" id="uc001ppa.5">
    <molecule id="Q8N323-1"/>
    <property type="organism name" value="human"/>
</dbReference>
<dbReference type="AGR" id="HGNC:28527"/>
<dbReference type="CTD" id="120400"/>
<dbReference type="DisGeNET" id="120400"/>
<dbReference type="GeneCards" id="NXPE1"/>
<dbReference type="HGNC" id="HGNC:28527">
    <property type="gene designation" value="NXPE1"/>
</dbReference>
<dbReference type="HPA" id="ENSG00000095110">
    <property type="expression patterns" value="Tissue enriched (intestine)"/>
</dbReference>
<dbReference type="neXtProt" id="NX_Q8N323"/>
<dbReference type="OpenTargets" id="ENSG00000095110"/>
<dbReference type="PharmGKB" id="PA134910690"/>
<dbReference type="VEuPathDB" id="HostDB:ENSG00000095110"/>
<dbReference type="eggNOG" id="ENOG502QW5F">
    <property type="taxonomic scope" value="Eukaryota"/>
</dbReference>
<dbReference type="GeneTree" id="ENSGT00950000182866"/>
<dbReference type="HOGENOM" id="CLU_031119_0_0_1"/>
<dbReference type="InParanoid" id="Q8N323"/>
<dbReference type="OMA" id="VEMMKDH"/>
<dbReference type="OrthoDB" id="2112051at2759"/>
<dbReference type="PAN-GO" id="Q8N323">
    <property type="GO annotations" value="0 GO annotations based on evolutionary models"/>
</dbReference>
<dbReference type="PhylomeDB" id="Q8N323"/>
<dbReference type="TreeFam" id="TF329555"/>
<dbReference type="PathwayCommons" id="Q8N323"/>
<dbReference type="SignaLink" id="Q8N323"/>
<dbReference type="BioGRID-ORCS" id="120400">
    <property type="hits" value="8 hits in 1140 CRISPR screens"/>
</dbReference>
<dbReference type="GenomeRNAi" id="120400"/>
<dbReference type="Pharos" id="Q8N323">
    <property type="development level" value="Tdark"/>
</dbReference>
<dbReference type="PRO" id="PR:Q8N323"/>
<dbReference type="Proteomes" id="UP000005640">
    <property type="component" value="Chromosome 11"/>
</dbReference>
<dbReference type="RNAct" id="Q8N323">
    <property type="molecule type" value="protein"/>
</dbReference>
<dbReference type="Bgee" id="ENSG00000095110">
    <property type="expression patterns" value="Expressed in rectum and 61 other cell types or tissues"/>
</dbReference>
<dbReference type="ExpressionAtlas" id="Q8N323">
    <property type="expression patterns" value="baseline and differential"/>
</dbReference>
<dbReference type="GO" id="GO:0005576">
    <property type="term" value="C:extracellular region"/>
    <property type="evidence" value="ECO:0007669"/>
    <property type="project" value="UniProtKB-SubCell"/>
</dbReference>
<dbReference type="Gene3D" id="2.60.40.10">
    <property type="entry name" value="Immunoglobulins"/>
    <property type="match status" value="1"/>
</dbReference>
<dbReference type="InterPro" id="IPR013783">
    <property type="entry name" value="Ig-like_fold"/>
</dbReference>
<dbReference type="InterPro" id="IPR014756">
    <property type="entry name" value="Ig_E-set"/>
</dbReference>
<dbReference type="InterPro" id="IPR057106">
    <property type="entry name" value="NXPE4_C"/>
</dbReference>
<dbReference type="InterPro" id="IPR026845">
    <property type="entry name" value="NXPH/NXPE"/>
</dbReference>
<dbReference type="PANTHER" id="PTHR16165">
    <property type="entry name" value="NXPE FAMILY MEMBER"/>
    <property type="match status" value="1"/>
</dbReference>
<dbReference type="PANTHER" id="PTHR16165:SF3">
    <property type="entry name" value="NXPE FAMILY MEMBER 1"/>
    <property type="match status" value="1"/>
</dbReference>
<dbReference type="Pfam" id="PF06312">
    <property type="entry name" value="Neurexophilin"/>
    <property type="match status" value="1"/>
</dbReference>
<dbReference type="Pfam" id="PF24536">
    <property type="entry name" value="NXPE4_C"/>
    <property type="match status" value="1"/>
</dbReference>
<dbReference type="SUPFAM" id="SSF81296">
    <property type="entry name" value="E set domains"/>
    <property type="match status" value="1"/>
</dbReference>
<accession>Q8N323</accession>
<accession>B0YJ13</accession>
<feature type="signal peptide" evidence="1">
    <location>
        <begin position="1"/>
        <end position="21"/>
    </location>
</feature>
<feature type="chain" id="PRO_0000307930" description="NXPE family member 1">
    <location>
        <begin position="22"/>
        <end position="547"/>
    </location>
</feature>
<feature type="glycosylation site" description="N-linked (GlcNAc...) asparagine" evidence="1">
    <location>
        <position position="39"/>
    </location>
</feature>
<feature type="glycosylation site" description="N-linked (GlcNAc...) asparagine" evidence="1">
    <location>
        <position position="211"/>
    </location>
</feature>
<feature type="splice variant" id="VSP_028872" description="In isoform 2." evidence="2">
    <location>
        <begin position="1"/>
        <end position="142"/>
    </location>
</feature>
<feature type="sequence variant" id="VAR_036712" description="In dbSNP:rs10891692.">
    <original>G</original>
    <variation>R</variation>
    <location>
        <position position="353"/>
    </location>
</feature>
<feature type="sequence variant" id="VAR_036713" description="In dbSNP:rs34993124.">
    <original>I</original>
    <variation>T</variation>
    <location>
        <position position="423"/>
    </location>
</feature>
<feature type="sequence conflict" description="In Ref. 4; AAH29049." evidence="3" ref="4">
    <original>G</original>
    <variation>V</variation>
    <location>
        <position position="491"/>
    </location>
</feature>
<gene>
    <name type="primary">NXPE1</name>
    <name type="synonym">FAM55A</name>
</gene>
<protein>
    <recommendedName>
        <fullName>NXPE family member 1</fullName>
    </recommendedName>
    <alternativeName>
        <fullName>Protein FAM55A</fullName>
    </alternativeName>
</protein>
<keyword id="KW-0025">Alternative splicing</keyword>
<keyword id="KW-0325">Glycoprotein</keyword>
<keyword id="KW-1267">Proteomics identification</keyword>
<keyword id="KW-1185">Reference proteome</keyword>
<keyword id="KW-0964">Secreted</keyword>
<keyword id="KW-0732">Signal</keyword>
<proteinExistence type="evidence at protein level"/>
<sequence length="547" mass="63178">MSSNTMLQKTLLILISFSVVTWMIFIISQNFTKLWSALNLSISVHYWNNSAKSLFPKTSLIPLKPLTETELRIKEIIEKLDQQIPPRPFTHVNTTTSATHSTATILNPRDTYCRGDQLDILLEVRDHLGQRKQYGGDFLRARMSSPALTAGASGKVMDFNNGTYLVSFTLFWEGQVSLSLLLIHPSEGASALWRARNQGYDKIIFKGKFVNGTSHVFTECGLTLNSNAELCEYLDDRDQEAFYCMKPQHMPCEALTYMTTRNREVSYLTDKENSLFHRSKVGVEMMKDRKHIDVTNCNKREKIEETCQVGMKPPVPGGYTLQGKWITTFCNQVQLDTIKINGCLKGKLIYLLGDSTLRQWIYYFPKVVKTLKFFDLHETGIFKKHLLLDAERHTQIQWKKHSYPFVTFQLYSLIDHDYIPREIDRLSGDKNTAIVITFGQHFRPFPIDIFIRRAIGVQKAIERLFLRSPATKVIIKTENIREMHIETERFGDFHGYIHYLIMKDIFKDLNVGIIDAWDMTIAYGTDTIHPPDHVIGNQINMFLNYIC</sequence>